<dbReference type="EC" id="3.4.24.-"/>
<dbReference type="MEROPS" id="M12.172"/>
<dbReference type="BRENDA" id="3.4.24.49">
    <property type="organism ID" value="2035"/>
</dbReference>
<dbReference type="GO" id="GO:0005576">
    <property type="term" value="C:extracellular region"/>
    <property type="evidence" value="ECO:0007669"/>
    <property type="project" value="UniProtKB-SubCell"/>
</dbReference>
<dbReference type="GO" id="GO:0046872">
    <property type="term" value="F:metal ion binding"/>
    <property type="evidence" value="ECO:0007669"/>
    <property type="project" value="UniProtKB-KW"/>
</dbReference>
<dbReference type="GO" id="GO:0008237">
    <property type="term" value="F:metallopeptidase activity"/>
    <property type="evidence" value="ECO:0007669"/>
    <property type="project" value="UniProtKB-KW"/>
</dbReference>
<dbReference type="GO" id="GO:0016504">
    <property type="term" value="F:peptidase activator activity"/>
    <property type="evidence" value="ECO:0007669"/>
    <property type="project" value="UniProtKB-KW"/>
</dbReference>
<dbReference type="GO" id="GO:0090729">
    <property type="term" value="F:toxin activity"/>
    <property type="evidence" value="ECO:0007669"/>
    <property type="project" value="UniProtKB-KW"/>
</dbReference>
<dbReference type="GO" id="GO:0006508">
    <property type="term" value="P:proteolysis"/>
    <property type="evidence" value="ECO:0007669"/>
    <property type="project" value="UniProtKB-KW"/>
</dbReference>
<feature type="chain" id="PRO_0000078201" description="Zinc metalloproteinase carinactivase-1 catalytic subunit">
    <location>
        <begin position="1"/>
        <end position="32" status="greater than"/>
    </location>
</feature>
<feature type="domain" description="Peptidase M12B" evidence="2">
    <location>
        <begin position="10"/>
        <end position="32" status="greater than"/>
    </location>
</feature>
<feature type="non-terminal residue">
    <location>
        <position position="32"/>
    </location>
</feature>
<keyword id="KW-1204">Blood coagulation cascade activating toxin</keyword>
<keyword id="KW-0106">Calcium</keyword>
<keyword id="KW-0903">Direct protein sequencing</keyword>
<keyword id="KW-1015">Disulfide bond</keyword>
<keyword id="KW-1199">Hemostasis impairing toxin</keyword>
<keyword id="KW-0378">Hydrolase</keyword>
<keyword id="KW-0479">Metal-binding</keyword>
<keyword id="KW-0482">Metalloprotease</keyword>
<keyword id="KW-0645">Protease</keyword>
<keyword id="KW-0655">Prothrombin activator</keyword>
<keyword id="KW-0964">Secreted</keyword>
<keyword id="KW-0800">Toxin</keyword>
<keyword id="KW-0862">Zinc</keyword>
<accession>Q9PRP9</accession>
<reference key="1">
    <citation type="journal article" date="1996" name="J. Biol. Chem.">
        <title>Isolation and characterization of carinactivase, a novel prothrombin activator in Echis carinatus venom with a unique catalytic mechanism.</title>
        <authorList>
            <person name="Yamada D."/>
            <person name="Sekiya F."/>
            <person name="Morita T."/>
        </authorList>
    </citation>
    <scope>PROTEIN SEQUENCE</scope>
    <scope>FUNCTION</scope>
    <scope>COFACTOR</scope>
    <scope>SUBUNIT</scope>
    <source>
        <tissue>Venom</tissue>
    </source>
</reference>
<reference key="2">
    <citation type="journal article" date="1999" name="Thromb. Res.">
        <title>CA-1 method, a novel assay for quantification of normal prothrombin using a Ca2+ -dependent prothrombin activator, carinactivase-1.</title>
        <authorList>
            <person name="Yamada D."/>
            <person name="Morita T."/>
        </authorList>
    </citation>
    <scope>BIOTECHNOLOGY</scope>
</reference>
<organism>
    <name type="scientific">Echis carinatus</name>
    <name type="common">Saw-scaled viper</name>
    <dbReference type="NCBI Taxonomy" id="40353"/>
    <lineage>
        <taxon>Eukaryota</taxon>
        <taxon>Metazoa</taxon>
        <taxon>Chordata</taxon>
        <taxon>Craniata</taxon>
        <taxon>Vertebrata</taxon>
        <taxon>Euteleostomi</taxon>
        <taxon>Lepidosauria</taxon>
        <taxon>Squamata</taxon>
        <taxon>Bifurcata</taxon>
        <taxon>Unidentata</taxon>
        <taxon>Episquamata</taxon>
        <taxon>Toxicofera</taxon>
        <taxon>Serpentes</taxon>
        <taxon>Colubroidea</taxon>
        <taxon>Viperidae</taxon>
        <taxon>Viperinae</taxon>
        <taxon>Echis</taxon>
    </lineage>
</organism>
<sequence length="32" mass="3751">SRKQKFDKKFIKLVIVVDHSMVXKXNNDLIAI</sequence>
<evidence type="ECO:0000250" key="1"/>
<evidence type="ECO:0000255" key="2">
    <source>
        <dbReference type="PROSITE-ProRule" id="PRU00276"/>
    </source>
</evidence>
<evidence type="ECO:0000269" key="3">
    <source>
    </source>
</evidence>
<evidence type="ECO:0000269" key="4">
    <source>
    </source>
</evidence>
<evidence type="ECO:0000305" key="5"/>
<proteinExistence type="evidence at protein level"/>
<comment type="function">
    <text evidence="4">Calcium-dependent prothrombin (F2) activator. This protein may activate prothrombin via recognition by the regulatory subunit of the calcium ion bound conformation of its gamma-carboxyglutamic acid (GLA) domain, and the subsequent conversion of prothrombin to active thrombin is catalyzed by the catalytic subunit.</text>
</comment>
<comment type="cofactor">
    <cofactor evidence="1">
        <name>Zn(2+)</name>
        <dbReference type="ChEBI" id="CHEBI:29105"/>
    </cofactor>
    <text evidence="1">Binds 1 zinc ion per subunit.</text>
</comment>
<comment type="subunit">
    <text evidence="4">Heterodimer of a metalloproteinase subunit and a regulatory subunit comprising two disulfide-linked lectins (14 kDa and 17 kDa chains) (AC Q9PRP7 and AC Q9PRP8).</text>
</comment>
<comment type="subcellular location">
    <subcellularLocation>
        <location>Secreted</location>
    </subcellularLocation>
</comment>
<comment type="tissue specificity">
    <text>Expressed by the venom gland.</text>
</comment>
<comment type="biotechnology">
    <text evidence="3">Used for quantification of normal prothrombin (CA-1 method).</text>
</comment>
<comment type="similarity">
    <text evidence="5">Belongs to the venom metalloproteinase (M12B) family. P-III subfamily. P-IIId sub-subfamily.</text>
</comment>
<name>VM3C1_ECHCA</name>
<protein>
    <recommendedName>
        <fullName>Zinc metalloproteinase carinactivase-1 catalytic subunit</fullName>
        <shortName>CA-1 catalytic subunit</shortName>
        <ecNumber>3.4.24.-</ecNumber>
    </recommendedName>
    <alternativeName>
        <fullName>Carinactivase-1 62 kDa subunit</fullName>
    </alternativeName>
    <alternativeName>
        <fullName>Snake venom metalloproteinase</fullName>
        <shortName>SVMP</shortName>
    </alternativeName>
</protein>